<feature type="chain" id="PRO_0000210596" description="Uncharacterized protein MG409">
    <location>
        <begin position="1"/>
        <end position="225"/>
    </location>
</feature>
<protein>
    <recommendedName>
        <fullName>Uncharacterized protein MG409</fullName>
    </recommendedName>
</protein>
<dbReference type="EMBL" id="L43967">
    <property type="protein sequence ID" value="AAC71637.1"/>
    <property type="molecule type" value="Genomic_DNA"/>
</dbReference>
<dbReference type="PIR" id="C64245">
    <property type="entry name" value="C64245"/>
</dbReference>
<dbReference type="RefSeq" id="WP_009885614.1">
    <property type="nucleotide sequence ID" value="NC_000908.2"/>
</dbReference>
<dbReference type="SMR" id="P47649"/>
<dbReference type="STRING" id="243273.MG_409"/>
<dbReference type="GeneID" id="88282594"/>
<dbReference type="KEGG" id="mge:MG_409"/>
<dbReference type="eggNOG" id="COG0704">
    <property type="taxonomic scope" value="Bacteria"/>
</dbReference>
<dbReference type="HOGENOM" id="CLU_107119_0_0_14"/>
<dbReference type="InParanoid" id="P47649"/>
<dbReference type="OrthoDB" id="9814256at2"/>
<dbReference type="BioCyc" id="MGEN243273:G1GJ2-506-MONOMER"/>
<dbReference type="Proteomes" id="UP000000807">
    <property type="component" value="Chromosome"/>
</dbReference>
<dbReference type="GO" id="GO:0030643">
    <property type="term" value="P:intracellular phosphate ion homeostasis"/>
    <property type="evidence" value="ECO:0007669"/>
    <property type="project" value="InterPro"/>
</dbReference>
<dbReference type="GO" id="GO:0045936">
    <property type="term" value="P:negative regulation of phosphate metabolic process"/>
    <property type="evidence" value="ECO:0007669"/>
    <property type="project" value="InterPro"/>
</dbReference>
<dbReference type="Gene3D" id="1.20.58.220">
    <property type="entry name" value="Phosphate transport system protein phou homolog 2, domain 2"/>
    <property type="match status" value="1"/>
</dbReference>
<dbReference type="InterPro" id="IPR028366">
    <property type="entry name" value="P_transport_PhoU"/>
</dbReference>
<dbReference type="InterPro" id="IPR038078">
    <property type="entry name" value="PhoU-like_sf"/>
</dbReference>
<dbReference type="InterPro" id="IPR026022">
    <property type="entry name" value="PhoU_dom"/>
</dbReference>
<dbReference type="NCBIfam" id="TIGR02135">
    <property type="entry name" value="phoU_full"/>
    <property type="match status" value="1"/>
</dbReference>
<dbReference type="PANTHER" id="PTHR42930">
    <property type="entry name" value="PHOSPHATE-SPECIFIC TRANSPORT SYSTEM ACCESSORY PROTEIN PHOU"/>
    <property type="match status" value="1"/>
</dbReference>
<dbReference type="PANTHER" id="PTHR42930:SF3">
    <property type="entry name" value="PHOSPHATE-SPECIFIC TRANSPORT SYSTEM ACCESSORY PROTEIN PHOU"/>
    <property type="match status" value="1"/>
</dbReference>
<dbReference type="Pfam" id="PF01895">
    <property type="entry name" value="PhoU"/>
    <property type="match status" value="2"/>
</dbReference>
<dbReference type="SUPFAM" id="SSF109755">
    <property type="entry name" value="PhoU-like"/>
    <property type="match status" value="1"/>
</dbReference>
<organism>
    <name type="scientific">Mycoplasma genitalium (strain ATCC 33530 / DSM 19775 / NCTC 10195 / G37)</name>
    <name type="common">Mycoplasmoides genitalium</name>
    <dbReference type="NCBI Taxonomy" id="243273"/>
    <lineage>
        <taxon>Bacteria</taxon>
        <taxon>Bacillati</taxon>
        <taxon>Mycoplasmatota</taxon>
        <taxon>Mycoplasmoidales</taxon>
        <taxon>Mycoplasmoidaceae</taxon>
        <taxon>Mycoplasmoides</taxon>
    </lineage>
</organism>
<name>Y409_MYCGE</name>
<accession>P47649</accession>
<sequence length="225" mass="27042">MENINYQILKRSEKKLLKLFFEYFKHVINAHETLNQLLCEDNLEKRKELIKTIYEMEDQSNRSEFKLINESIWTISKNSPLASHLRLTITIIMSSRDLERICDYANNLTKFIEHYLHLDIKIFNNLVTLHQSALNNLKKTFESLQDKEKPLTLQFENATKTIIEFEHQYRLVLTKYYETINKNEVTERIFLIDLVASVKHIERINDYCYNIIKSFLFIKNPEIFN</sequence>
<gene>
    <name type="ordered locus">MG409</name>
</gene>
<proteinExistence type="predicted"/>
<keyword id="KW-1185">Reference proteome</keyword>
<reference key="1">
    <citation type="journal article" date="1995" name="Science">
        <title>The minimal gene complement of Mycoplasma genitalium.</title>
        <authorList>
            <person name="Fraser C.M."/>
            <person name="Gocayne J.D."/>
            <person name="White O."/>
            <person name="Adams M.D."/>
            <person name="Clayton R.A."/>
            <person name="Fleischmann R.D."/>
            <person name="Bult C.J."/>
            <person name="Kerlavage A.R."/>
            <person name="Sutton G.G."/>
            <person name="Kelley J.M."/>
            <person name="Fritchman J.L."/>
            <person name="Weidman J.F."/>
            <person name="Small K.V."/>
            <person name="Sandusky M."/>
            <person name="Fuhrmann J.L."/>
            <person name="Nguyen D.T."/>
            <person name="Utterback T.R."/>
            <person name="Saudek D.M."/>
            <person name="Phillips C.A."/>
            <person name="Merrick J.M."/>
            <person name="Tomb J.-F."/>
            <person name="Dougherty B.A."/>
            <person name="Bott K.F."/>
            <person name="Hu P.-C."/>
            <person name="Lucier T.S."/>
            <person name="Peterson S.N."/>
            <person name="Smith H.O."/>
            <person name="Hutchison C.A. III"/>
            <person name="Venter J.C."/>
        </authorList>
    </citation>
    <scope>NUCLEOTIDE SEQUENCE [LARGE SCALE GENOMIC DNA]</scope>
    <source>
        <strain>ATCC 33530 / DSM 19775 / NCTC 10195 / G37</strain>
    </source>
</reference>